<name>G6PI_BUCAT</name>
<comment type="function">
    <text evidence="1">Catalyzes the reversible isomerization of glucose-6-phosphate to fructose-6-phosphate.</text>
</comment>
<comment type="catalytic activity">
    <reaction evidence="1">
        <text>alpha-D-glucose 6-phosphate = beta-D-fructose 6-phosphate</text>
        <dbReference type="Rhea" id="RHEA:11816"/>
        <dbReference type="ChEBI" id="CHEBI:57634"/>
        <dbReference type="ChEBI" id="CHEBI:58225"/>
        <dbReference type="EC" id="5.3.1.9"/>
    </reaction>
</comment>
<comment type="pathway">
    <text evidence="1">Carbohydrate biosynthesis; gluconeogenesis.</text>
</comment>
<comment type="pathway">
    <text evidence="1">Carbohydrate degradation; glycolysis; D-glyceraldehyde 3-phosphate and glycerone phosphate from D-glucose: step 2/4.</text>
</comment>
<comment type="subcellular location">
    <subcellularLocation>
        <location evidence="1">Cytoplasm</location>
    </subcellularLocation>
</comment>
<comment type="similarity">
    <text evidence="1">Belongs to the GPI family.</text>
</comment>
<evidence type="ECO:0000255" key="1">
    <source>
        <dbReference type="HAMAP-Rule" id="MF_00473"/>
    </source>
</evidence>
<organism>
    <name type="scientific">Buchnera aphidicola subsp. Acyrthosiphon pisum (strain Tuc7)</name>
    <dbReference type="NCBI Taxonomy" id="561501"/>
    <lineage>
        <taxon>Bacteria</taxon>
        <taxon>Pseudomonadati</taxon>
        <taxon>Pseudomonadota</taxon>
        <taxon>Gammaproteobacteria</taxon>
        <taxon>Enterobacterales</taxon>
        <taxon>Erwiniaceae</taxon>
        <taxon>Buchnera</taxon>
    </lineage>
</organism>
<reference key="1">
    <citation type="journal article" date="2009" name="Science">
        <title>The dynamics and time scale of ongoing genomic erosion in symbiotic bacteria.</title>
        <authorList>
            <person name="Moran N.A."/>
            <person name="McLaughlin H.J."/>
            <person name="Sorek R."/>
        </authorList>
    </citation>
    <scope>NUCLEOTIDE SEQUENCE [LARGE SCALE GENOMIC DNA]</scope>
    <source>
        <strain>Tuc7</strain>
    </source>
</reference>
<accession>B8D894</accession>
<feature type="chain" id="PRO_1000135520" description="Glucose-6-phosphate isomerase">
    <location>
        <begin position="1"/>
        <end position="549"/>
    </location>
</feature>
<feature type="active site" description="Proton donor" evidence="1">
    <location>
        <position position="355"/>
    </location>
</feature>
<feature type="active site" evidence="1">
    <location>
        <position position="386"/>
    </location>
</feature>
<feature type="active site" evidence="1">
    <location>
        <position position="514"/>
    </location>
</feature>
<sequence>MKNINFNNTQSYQDLKNHFRKIKNIHLRDLFASDLNRFKKFSIIFENEMLIDFSKNRITDETLIYLLNLAKETDVKSGIKLMFSGAKINKTENRSVLHIALRNRTNRPIILNNCNIMLEVNALLEKMKNFSKMVIHGEWKGYTGKSISNVVNIGIGGSDLGPYMVTEALRPYKNHLNMYYVSNIDGTHLTEVLKKINPENTIFLIASKTFTTDETITNAHSAKKWFLHYSQDQSALDKHFFALSANIKNALNFGININNIFKFWDWVGGRFSLWSSAGLSIMLSIGFDNFEKFLDGAHAMDNHFYHTNYKENIPILLALISIWYTNFFGSETEAIFPYDQYMHRFSAYFQQSNMESNGKSINRNGQRINYQTGPIIWGEPGTNGQHAFYQLIHQGTRLIPCDFIAPVFSHNDLNNHHMKLISNFFAQTQALAFGQSRDSILHRLILSKKNQDDIKRILPFKICKGNQPTNSILIRKITPYNLGALIALYEHKIFVQGYILNIFSFDQWGVELGKELSQNIYNYLNINVKNKSYDASTEGLINFYKSFMI</sequence>
<keyword id="KW-0963">Cytoplasm</keyword>
<keyword id="KW-0312">Gluconeogenesis</keyword>
<keyword id="KW-0324">Glycolysis</keyword>
<keyword id="KW-0413">Isomerase</keyword>
<dbReference type="EC" id="5.3.1.9" evidence="1"/>
<dbReference type="EMBL" id="CP001158">
    <property type="protein sequence ID" value="ACL30359.1"/>
    <property type="molecule type" value="Genomic_DNA"/>
</dbReference>
<dbReference type="RefSeq" id="WP_010896169.1">
    <property type="nucleotide sequence ID" value="NC_011834.1"/>
</dbReference>
<dbReference type="SMR" id="B8D894"/>
<dbReference type="KEGG" id="bau:BUAPTUC7_567"/>
<dbReference type="HOGENOM" id="CLU_017947_3_1_6"/>
<dbReference type="UniPathway" id="UPA00109">
    <property type="reaction ID" value="UER00181"/>
</dbReference>
<dbReference type="UniPathway" id="UPA00138"/>
<dbReference type="GO" id="GO:0005829">
    <property type="term" value="C:cytosol"/>
    <property type="evidence" value="ECO:0007669"/>
    <property type="project" value="TreeGrafter"/>
</dbReference>
<dbReference type="GO" id="GO:0097367">
    <property type="term" value="F:carbohydrate derivative binding"/>
    <property type="evidence" value="ECO:0007669"/>
    <property type="project" value="InterPro"/>
</dbReference>
<dbReference type="GO" id="GO:0004347">
    <property type="term" value="F:glucose-6-phosphate isomerase activity"/>
    <property type="evidence" value="ECO:0007669"/>
    <property type="project" value="UniProtKB-UniRule"/>
</dbReference>
<dbReference type="GO" id="GO:0048029">
    <property type="term" value="F:monosaccharide binding"/>
    <property type="evidence" value="ECO:0007669"/>
    <property type="project" value="TreeGrafter"/>
</dbReference>
<dbReference type="GO" id="GO:0006094">
    <property type="term" value="P:gluconeogenesis"/>
    <property type="evidence" value="ECO:0007669"/>
    <property type="project" value="UniProtKB-UniRule"/>
</dbReference>
<dbReference type="GO" id="GO:0051156">
    <property type="term" value="P:glucose 6-phosphate metabolic process"/>
    <property type="evidence" value="ECO:0007669"/>
    <property type="project" value="TreeGrafter"/>
</dbReference>
<dbReference type="GO" id="GO:0006096">
    <property type="term" value="P:glycolytic process"/>
    <property type="evidence" value="ECO:0007669"/>
    <property type="project" value="UniProtKB-UniRule"/>
</dbReference>
<dbReference type="CDD" id="cd05015">
    <property type="entry name" value="SIS_PGI_1"/>
    <property type="match status" value="1"/>
</dbReference>
<dbReference type="CDD" id="cd05016">
    <property type="entry name" value="SIS_PGI_2"/>
    <property type="match status" value="1"/>
</dbReference>
<dbReference type="FunFam" id="3.40.50.10490:FF:000004">
    <property type="entry name" value="Glucose-6-phosphate isomerase"/>
    <property type="match status" value="1"/>
</dbReference>
<dbReference type="Gene3D" id="1.10.1390.10">
    <property type="match status" value="1"/>
</dbReference>
<dbReference type="Gene3D" id="3.40.50.10490">
    <property type="entry name" value="Glucose-6-phosphate isomerase like protein, domain 1"/>
    <property type="match status" value="2"/>
</dbReference>
<dbReference type="HAMAP" id="MF_00473">
    <property type="entry name" value="G6P_isomerase"/>
    <property type="match status" value="1"/>
</dbReference>
<dbReference type="InterPro" id="IPR001672">
    <property type="entry name" value="G6P_Isomerase"/>
</dbReference>
<dbReference type="InterPro" id="IPR023096">
    <property type="entry name" value="G6P_Isomerase_C"/>
</dbReference>
<dbReference type="InterPro" id="IPR018189">
    <property type="entry name" value="Phosphoglucose_isomerase_CS"/>
</dbReference>
<dbReference type="InterPro" id="IPR046348">
    <property type="entry name" value="SIS_dom_sf"/>
</dbReference>
<dbReference type="InterPro" id="IPR035476">
    <property type="entry name" value="SIS_PGI_1"/>
</dbReference>
<dbReference type="InterPro" id="IPR035482">
    <property type="entry name" value="SIS_PGI_2"/>
</dbReference>
<dbReference type="NCBIfam" id="NF001211">
    <property type="entry name" value="PRK00179.1"/>
    <property type="match status" value="1"/>
</dbReference>
<dbReference type="PANTHER" id="PTHR11469">
    <property type="entry name" value="GLUCOSE-6-PHOSPHATE ISOMERASE"/>
    <property type="match status" value="1"/>
</dbReference>
<dbReference type="PANTHER" id="PTHR11469:SF1">
    <property type="entry name" value="GLUCOSE-6-PHOSPHATE ISOMERASE"/>
    <property type="match status" value="1"/>
</dbReference>
<dbReference type="Pfam" id="PF00342">
    <property type="entry name" value="PGI"/>
    <property type="match status" value="1"/>
</dbReference>
<dbReference type="PRINTS" id="PR00662">
    <property type="entry name" value="G6PISOMERASE"/>
</dbReference>
<dbReference type="SUPFAM" id="SSF53697">
    <property type="entry name" value="SIS domain"/>
    <property type="match status" value="1"/>
</dbReference>
<dbReference type="PROSITE" id="PS00765">
    <property type="entry name" value="P_GLUCOSE_ISOMERASE_1"/>
    <property type="match status" value="1"/>
</dbReference>
<dbReference type="PROSITE" id="PS00174">
    <property type="entry name" value="P_GLUCOSE_ISOMERASE_2"/>
    <property type="match status" value="1"/>
</dbReference>
<dbReference type="PROSITE" id="PS51463">
    <property type="entry name" value="P_GLUCOSE_ISOMERASE_3"/>
    <property type="match status" value="1"/>
</dbReference>
<proteinExistence type="inferred from homology"/>
<gene>
    <name evidence="1" type="primary">pgi</name>
    <name type="ordered locus">BUAPTUC7_567</name>
</gene>
<protein>
    <recommendedName>
        <fullName evidence="1">Glucose-6-phosphate isomerase</fullName>
        <shortName evidence="1">GPI</shortName>
        <ecNumber evidence="1">5.3.1.9</ecNumber>
    </recommendedName>
    <alternativeName>
        <fullName evidence="1">Phosphoglucose isomerase</fullName>
        <shortName evidence="1">PGI</shortName>
    </alternativeName>
    <alternativeName>
        <fullName evidence="1">Phosphohexose isomerase</fullName>
        <shortName evidence="1">PHI</shortName>
    </alternativeName>
</protein>